<name>QUEC_METBF</name>
<feature type="chain" id="PRO_0000246979" description="7-cyano-7-deazaguanine synthase">
    <location>
        <begin position="1"/>
        <end position="231"/>
    </location>
</feature>
<feature type="binding site" evidence="1">
    <location>
        <begin position="7"/>
        <end position="17"/>
    </location>
    <ligand>
        <name>ATP</name>
        <dbReference type="ChEBI" id="CHEBI:30616"/>
    </ligand>
</feature>
<feature type="binding site" evidence="1">
    <location>
        <position position="195"/>
    </location>
    <ligand>
        <name>Zn(2+)</name>
        <dbReference type="ChEBI" id="CHEBI:29105"/>
    </ligand>
</feature>
<feature type="binding site" evidence="1">
    <location>
        <position position="203"/>
    </location>
    <ligand>
        <name>Zn(2+)</name>
        <dbReference type="ChEBI" id="CHEBI:29105"/>
    </ligand>
</feature>
<feature type="binding site" evidence="1">
    <location>
        <position position="206"/>
    </location>
    <ligand>
        <name>Zn(2+)</name>
        <dbReference type="ChEBI" id="CHEBI:29105"/>
    </ligand>
</feature>
<feature type="binding site" evidence="1">
    <location>
        <position position="209"/>
    </location>
    <ligand>
        <name>Zn(2+)</name>
        <dbReference type="ChEBI" id="CHEBI:29105"/>
    </ligand>
</feature>
<comment type="function">
    <text evidence="1">Catalyzes the ATP-dependent conversion of 7-carboxy-7-deazaguanine (CDG) to 7-cyano-7-deazaguanine (preQ(0)).</text>
</comment>
<comment type="catalytic activity">
    <reaction evidence="1">
        <text>7-carboxy-7-deazaguanine + NH4(+) + ATP = 7-cyano-7-deazaguanine + ADP + phosphate + H2O + H(+)</text>
        <dbReference type="Rhea" id="RHEA:27982"/>
        <dbReference type="ChEBI" id="CHEBI:15377"/>
        <dbReference type="ChEBI" id="CHEBI:15378"/>
        <dbReference type="ChEBI" id="CHEBI:28938"/>
        <dbReference type="ChEBI" id="CHEBI:30616"/>
        <dbReference type="ChEBI" id="CHEBI:43474"/>
        <dbReference type="ChEBI" id="CHEBI:45075"/>
        <dbReference type="ChEBI" id="CHEBI:61036"/>
        <dbReference type="ChEBI" id="CHEBI:456216"/>
        <dbReference type="EC" id="6.3.4.20"/>
    </reaction>
</comment>
<comment type="cofactor">
    <cofactor evidence="1">
        <name>Zn(2+)</name>
        <dbReference type="ChEBI" id="CHEBI:29105"/>
    </cofactor>
    <text evidence="1">Binds 1 zinc ion per subunit.</text>
</comment>
<comment type="pathway">
    <text evidence="1">Purine metabolism; 7-cyano-7-deazaguanine biosynthesis.</text>
</comment>
<comment type="similarity">
    <text evidence="1">Belongs to the QueC family.</text>
</comment>
<accession>Q46G70</accession>
<sequence length="231" mass="25639">MKAITLLSSGLDSVAALAIAAEDFDIEMAITFDYGQRAREREIEYSRKVCEYFGIEHRVIKLDWLSEITSTSLVNRDVEVPSLSFEDIGEAAPAEITDASAKAVWVPNRNGVMLNIAGSFAESRECEYLVVGFNGEEAGTFPDNSLDYVKAMDRAFFYSTQNGVKILAPLIELGKTEIVRRALEAKAPLEYSWSCYRGEEIPCGECESCVRRARAFKNAGVKDPLLERLGI</sequence>
<dbReference type="EC" id="6.3.4.20" evidence="1"/>
<dbReference type="EMBL" id="CP000099">
    <property type="protein sequence ID" value="AAZ69122.1"/>
    <property type="molecule type" value="Genomic_DNA"/>
</dbReference>
<dbReference type="SMR" id="Q46G70"/>
<dbReference type="STRING" id="269797.Mbar_A0137"/>
<dbReference type="PaxDb" id="269797-Mbar_A0137"/>
<dbReference type="KEGG" id="mba:Mbar_A0137"/>
<dbReference type="eggNOG" id="arCOG00039">
    <property type="taxonomic scope" value="Archaea"/>
</dbReference>
<dbReference type="HOGENOM" id="CLU_081854_1_0_2"/>
<dbReference type="OrthoDB" id="6532at2157"/>
<dbReference type="UniPathway" id="UPA00391"/>
<dbReference type="GO" id="GO:0005524">
    <property type="term" value="F:ATP binding"/>
    <property type="evidence" value="ECO:0007669"/>
    <property type="project" value="UniProtKB-UniRule"/>
</dbReference>
<dbReference type="GO" id="GO:0016879">
    <property type="term" value="F:ligase activity, forming carbon-nitrogen bonds"/>
    <property type="evidence" value="ECO:0007669"/>
    <property type="project" value="UniProtKB-UniRule"/>
</dbReference>
<dbReference type="GO" id="GO:0008270">
    <property type="term" value="F:zinc ion binding"/>
    <property type="evidence" value="ECO:0007669"/>
    <property type="project" value="UniProtKB-UniRule"/>
</dbReference>
<dbReference type="CDD" id="cd01995">
    <property type="entry name" value="QueC-like"/>
    <property type="match status" value="1"/>
</dbReference>
<dbReference type="Gene3D" id="3.40.50.620">
    <property type="entry name" value="HUPs"/>
    <property type="match status" value="1"/>
</dbReference>
<dbReference type="HAMAP" id="MF_01633">
    <property type="entry name" value="QueC"/>
    <property type="match status" value="1"/>
</dbReference>
<dbReference type="InterPro" id="IPR018317">
    <property type="entry name" value="QueC"/>
</dbReference>
<dbReference type="InterPro" id="IPR014729">
    <property type="entry name" value="Rossmann-like_a/b/a_fold"/>
</dbReference>
<dbReference type="NCBIfam" id="TIGR00364">
    <property type="entry name" value="7-cyano-7-deazaguanine synthase QueC"/>
    <property type="match status" value="1"/>
</dbReference>
<dbReference type="PANTHER" id="PTHR42914">
    <property type="entry name" value="7-CYANO-7-DEAZAGUANINE SYNTHASE"/>
    <property type="match status" value="1"/>
</dbReference>
<dbReference type="PANTHER" id="PTHR42914:SF1">
    <property type="entry name" value="7-CYANO-7-DEAZAGUANINE SYNTHASE"/>
    <property type="match status" value="1"/>
</dbReference>
<dbReference type="Pfam" id="PF06508">
    <property type="entry name" value="QueC"/>
    <property type="match status" value="1"/>
</dbReference>
<dbReference type="PIRSF" id="PIRSF006293">
    <property type="entry name" value="ExsB"/>
    <property type="match status" value="1"/>
</dbReference>
<dbReference type="SUPFAM" id="SSF52402">
    <property type="entry name" value="Adenine nucleotide alpha hydrolases-like"/>
    <property type="match status" value="1"/>
</dbReference>
<gene>
    <name evidence="1" type="primary">queC</name>
    <name type="ordered locus">Mbar_A0137</name>
</gene>
<evidence type="ECO:0000255" key="1">
    <source>
        <dbReference type="HAMAP-Rule" id="MF_01633"/>
    </source>
</evidence>
<organism>
    <name type="scientific">Methanosarcina barkeri (strain Fusaro / DSM 804)</name>
    <dbReference type="NCBI Taxonomy" id="269797"/>
    <lineage>
        <taxon>Archaea</taxon>
        <taxon>Methanobacteriati</taxon>
        <taxon>Methanobacteriota</taxon>
        <taxon>Stenosarchaea group</taxon>
        <taxon>Methanomicrobia</taxon>
        <taxon>Methanosarcinales</taxon>
        <taxon>Methanosarcinaceae</taxon>
        <taxon>Methanosarcina</taxon>
    </lineage>
</organism>
<proteinExistence type="inferred from homology"/>
<protein>
    <recommendedName>
        <fullName evidence="1">7-cyano-7-deazaguanine synthase</fullName>
        <ecNumber evidence="1">6.3.4.20</ecNumber>
    </recommendedName>
    <alternativeName>
        <fullName evidence="1">7-cyano-7-carbaguanine synthase</fullName>
    </alternativeName>
    <alternativeName>
        <fullName evidence="1">Archaeosine biosynthesis protein QueC</fullName>
    </alternativeName>
    <alternativeName>
        <fullName evidence="1">PreQ(0) synthase</fullName>
    </alternativeName>
</protein>
<keyword id="KW-0067">ATP-binding</keyword>
<keyword id="KW-0436">Ligase</keyword>
<keyword id="KW-0479">Metal-binding</keyword>
<keyword id="KW-0547">Nucleotide-binding</keyword>
<keyword id="KW-0862">Zinc</keyword>
<reference key="1">
    <citation type="journal article" date="2006" name="J. Bacteriol.">
        <title>The Methanosarcina barkeri genome: comparative analysis with Methanosarcina acetivorans and Methanosarcina mazei reveals extensive rearrangement within methanosarcinal genomes.</title>
        <authorList>
            <person name="Maeder D.L."/>
            <person name="Anderson I."/>
            <person name="Brettin T.S."/>
            <person name="Bruce D.C."/>
            <person name="Gilna P."/>
            <person name="Han C.S."/>
            <person name="Lapidus A."/>
            <person name="Metcalf W.W."/>
            <person name="Saunders E."/>
            <person name="Tapia R."/>
            <person name="Sowers K.R."/>
        </authorList>
    </citation>
    <scope>NUCLEOTIDE SEQUENCE [LARGE SCALE GENOMIC DNA]</scope>
    <source>
        <strain>Fusaro / DSM 804</strain>
    </source>
</reference>